<protein>
    <recommendedName>
        <fullName>Deubiquitinase and deneddylase Dub1</fullName>
        <shortName>ChlaDub1</shortName>
        <ecNumber>3.4.22.-</ecNumber>
    </recommendedName>
</protein>
<gene>
    <name type="primary">cdu1</name>
    <name type="ordered locus">CT_868</name>
</gene>
<dbReference type="EC" id="3.4.22.-"/>
<dbReference type="EMBL" id="AE001273">
    <property type="protein sequence ID" value="AAC68466.1"/>
    <property type="molecule type" value="Genomic_DNA"/>
</dbReference>
<dbReference type="PIR" id="D71460">
    <property type="entry name" value="D71460"/>
</dbReference>
<dbReference type="RefSeq" id="NP_220390.1">
    <property type="nucleotide sequence ID" value="NC_000117.1"/>
</dbReference>
<dbReference type="RefSeq" id="WP_009872258.1">
    <property type="nucleotide sequence ID" value="NC_000117.1"/>
</dbReference>
<dbReference type="SMR" id="O84876"/>
<dbReference type="STRING" id="272561.CT_868"/>
<dbReference type="MEROPS" id="C48.032"/>
<dbReference type="EnsemblBacteria" id="AAC68466">
    <property type="protein sequence ID" value="AAC68466"/>
    <property type="gene ID" value="CT_868"/>
</dbReference>
<dbReference type="GeneID" id="884669"/>
<dbReference type="KEGG" id="ctr:CT_868"/>
<dbReference type="PATRIC" id="fig|272561.5.peg.959"/>
<dbReference type="HOGENOM" id="CLU_067510_0_0_0"/>
<dbReference type="InParanoid" id="O84876"/>
<dbReference type="OrthoDB" id="9964431at2"/>
<dbReference type="Proteomes" id="UP000000431">
    <property type="component" value="Chromosome"/>
</dbReference>
<dbReference type="GO" id="GO:0005576">
    <property type="term" value="C:extracellular region"/>
    <property type="evidence" value="ECO:0000250"/>
    <property type="project" value="UniProtKB"/>
</dbReference>
<dbReference type="GO" id="GO:0043657">
    <property type="term" value="C:host cell"/>
    <property type="evidence" value="ECO:0007669"/>
    <property type="project" value="UniProtKB-SubCell"/>
</dbReference>
<dbReference type="GO" id="GO:0016020">
    <property type="term" value="C:membrane"/>
    <property type="evidence" value="ECO:0007669"/>
    <property type="project" value="UniProtKB-SubCell"/>
</dbReference>
<dbReference type="GO" id="GO:0004843">
    <property type="term" value="F:cysteine-type deubiquitinase activity"/>
    <property type="evidence" value="ECO:0000314"/>
    <property type="project" value="UniProtKB"/>
</dbReference>
<dbReference type="GO" id="GO:0019784">
    <property type="term" value="F:deNEDDylase activity"/>
    <property type="evidence" value="ECO:0000314"/>
    <property type="project" value="UniProtKB"/>
</dbReference>
<dbReference type="GO" id="GO:0000338">
    <property type="term" value="P:protein deneddylation"/>
    <property type="evidence" value="ECO:0000314"/>
    <property type="project" value="UniProtKB"/>
</dbReference>
<dbReference type="GO" id="GO:0016579">
    <property type="term" value="P:protein deubiquitination"/>
    <property type="evidence" value="ECO:0000314"/>
    <property type="project" value="UniProtKB"/>
</dbReference>
<dbReference type="GO" id="GO:0006508">
    <property type="term" value="P:proteolysis"/>
    <property type="evidence" value="ECO:0007669"/>
    <property type="project" value="UniProtKB-KW"/>
</dbReference>
<dbReference type="FunFam" id="3.40.395.10:FF:000016">
    <property type="entry name" value="Deubiquitinase and deneddylase Dub1"/>
    <property type="match status" value="1"/>
</dbReference>
<dbReference type="Gene3D" id="3.40.395.10">
    <property type="entry name" value="Adenoviral Proteinase, Chain A"/>
    <property type="match status" value="1"/>
</dbReference>
<dbReference type="InterPro" id="IPR038765">
    <property type="entry name" value="Papain-like_cys_pep_sf"/>
</dbReference>
<dbReference type="InterPro" id="IPR003653">
    <property type="entry name" value="Peptidase_C48_C"/>
</dbReference>
<dbReference type="Pfam" id="PF02902">
    <property type="entry name" value="Peptidase_C48"/>
    <property type="match status" value="1"/>
</dbReference>
<dbReference type="PRINTS" id="PR01217">
    <property type="entry name" value="PRICHEXTENSN"/>
</dbReference>
<dbReference type="SUPFAM" id="SSF54001">
    <property type="entry name" value="Cysteine proteinases"/>
    <property type="match status" value="1"/>
</dbReference>
<dbReference type="PROSITE" id="PS50600">
    <property type="entry name" value="ULP_PROTEASE"/>
    <property type="match status" value="1"/>
</dbReference>
<reference key="1">
    <citation type="journal article" date="1998" name="Science">
        <title>Genome sequence of an obligate intracellular pathogen of humans: Chlamydia trachomatis.</title>
        <authorList>
            <person name="Stephens R.S."/>
            <person name="Kalman S."/>
            <person name="Lammel C.J."/>
            <person name="Fan J."/>
            <person name="Marathe R."/>
            <person name="Aravind L."/>
            <person name="Mitchell W.P."/>
            <person name="Olinger L."/>
            <person name="Tatusov R.L."/>
            <person name="Zhao Q."/>
            <person name="Koonin E.V."/>
            <person name="Davis R.W."/>
        </authorList>
    </citation>
    <scope>NUCLEOTIDE SEQUENCE [LARGE SCALE GENOMIC DNA]</scope>
    <source>
        <strain>ATCC VR-885 / DSM 19411 / UW-3/Cx</strain>
    </source>
</reference>
<reference key="2">
    <citation type="journal article" date="2006" name="Mol. Microbiol.">
        <title>Chlamydia trachomatis-derived deubiquitinating enzymes in mammalian cells during infection.</title>
        <authorList>
            <person name="Misaghi S."/>
            <person name="Balsara Z.R."/>
            <person name="Catic A."/>
            <person name="Spooner E."/>
            <person name="Ploegh H.L."/>
            <person name="Starnbach M.N."/>
        </authorList>
    </citation>
    <scope>FUNCTION AS A PROTEASE</scope>
    <scope>IDENTIFICATION BY MASS SPECTROMETRY</scope>
    <scope>MUTAGENESIS OF CYS-358</scope>
    <source>
        <strain>L2</strain>
    </source>
</reference>
<accession>O84876</accession>
<proteinExistence type="evidence at protein level"/>
<name>CDUB1_CHLTR</name>
<feature type="chain" id="PRO_0000396489" description="Deubiquitinase and deneddylase Dub1">
    <location>
        <begin position="1"/>
        <end position="418"/>
    </location>
</feature>
<feature type="transmembrane region" description="Helical" evidence="2">
    <location>
        <begin position="40"/>
        <end position="60"/>
    </location>
</feature>
<feature type="region of interest" description="Disordered" evidence="3">
    <location>
        <begin position="1"/>
        <end position="23"/>
    </location>
</feature>
<feature type="region of interest" description="Disordered" evidence="3">
    <location>
        <begin position="72"/>
        <end position="143"/>
    </location>
</feature>
<feature type="compositionally biased region" description="Polar residues" evidence="3">
    <location>
        <begin position="1"/>
        <end position="10"/>
    </location>
</feature>
<feature type="compositionally biased region" description="Pro residues" evidence="3">
    <location>
        <begin position="86"/>
        <end position="141"/>
    </location>
</feature>
<feature type="active site" evidence="2">
    <location>
        <position position="288"/>
    </location>
</feature>
<feature type="active site" evidence="2">
    <location>
        <position position="305"/>
    </location>
</feature>
<feature type="active site" evidence="5">
    <location>
        <position position="358"/>
    </location>
</feature>
<feature type="mutagenesis site" description="Loss of activity." evidence="4">
    <original>C</original>
    <variation>A</variation>
    <location>
        <position position="358"/>
    </location>
</feature>
<organism>
    <name type="scientific">Chlamydia trachomatis serovar D (strain ATCC VR-885 / DSM 19411 / UW-3/Cx)</name>
    <dbReference type="NCBI Taxonomy" id="272561"/>
    <lineage>
        <taxon>Bacteria</taxon>
        <taxon>Pseudomonadati</taxon>
        <taxon>Chlamydiota</taxon>
        <taxon>Chlamydiia</taxon>
        <taxon>Chlamydiales</taxon>
        <taxon>Chlamydiaceae</taxon>
        <taxon>Chlamydia/Chlamydophila group</taxon>
        <taxon>Chlamydia</taxon>
    </lineage>
</organism>
<evidence type="ECO:0000250" key="1"/>
<evidence type="ECO:0000255" key="2"/>
<evidence type="ECO:0000256" key="3">
    <source>
        <dbReference type="SAM" id="MobiDB-lite"/>
    </source>
</evidence>
<evidence type="ECO:0000269" key="4">
    <source>
    </source>
</evidence>
<evidence type="ECO:0000305" key="5"/>
<comment type="function">
    <text evidence="4">Effector proteins function to alter host cell physiology and promote bacterial survival in host tissues. This protease possesses deubiquitinating and deneddylating activities.</text>
</comment>
<comment type="subcellular location">
    <subcellularLocation>
        <location evidence="1">Secreted</location>
    </subcellularLocation>
    <subcellularLocation>
        <location evidence="1">Host cell</location>
    </subcellularLocation>
    <subcellularLocation>
        <location evidence="1">Membrane</location>
        <topology evidence="1">Single-pass membrane protein</topology>
    </subcellularLocation>
    <text evidence="1">Secreted, and delivered into the host cell.</text>
</comment>
<comment type="similarity">
    <text evidence="5">Belongs to the peptidase C48 family.</text>
</comment>
<keyword id="KW-0378">Hydrolase</keyword>
<keyword id="KW-0472">Membrane</keyword>
<keyword id="KW-0645">Protease</keyword>
<keyword id="KW-1185">Reference proteome</keyword>
<keyword id="KW-0964">Secreted</keyword>
<keyword id="KW-0788">Thiol protease</keyword>
<keyword id="KW-0812">Transmembrane</keyword>
<keyword id="KW-1133">Transmembrane helix</keyword>
<keyword id="KW-0833">Ubl conjugation pathway</keyword>
<keyword id="KW-0843">Virulence</keyword>
<sequence>MLSPTNSTSKKAPVPPQDSSKPVLISEEPQNQLLQKVARTALAVLLVVVTLGLILLFYSFSDLQSFPWCCQTRPSTKEQPTISIPVPLPSPPLAVPRPSTPPPPVISRPSTPPAPTPAISPPSTPSAPKPSTPPPLPPKAPKPVKTQEDLLPFVPEQVFVEMYEDMARRWIIEALVPAWDSDIIFKCLCYFHTLYQGLIPLETFPPATIFNFKQKIISILEDKKAVLRGEPIKGSLPICCSEENYRRHLHGTTLLPVFMWYHPTPKTLSDTMQTMKQLAIKGSVGASHWLLVIVDIQARRLVYFDSLYNYVMSPEDMEKDLQSFAQQLDQVYPAYDSQKFSVKIAAKEVIQKGSGSSCGAWCCQFLHWYLRDPFTDALNDLPVDSVERHENLASFVQACEAAVQDLPELFWPEAKALF</sequence>